<keyword id="KW-0687">Ribonucleoprotein</keyword>
<keyword id="KW-0689">Ribosomal protein</keyword>
<organism>
    <name type="scientific">Xanthomonas campestris pv. campestris (strain B100)</name>
    <dbReference type="NCBI Taxonomy" id="509169"/>
    <lineage>
        <taxon>Bacteria</taxon>
        <taxon>Pseudomonadati</taxon>
        <taxon>Pseudomonadota</taxon>
        <taxon>Gammaproteobacteria</taxon>
        <taxon>Lysobacterales</taxon>
        <taxon>Lysobacteraceae</taxon>
        <taxon>Xanthomonas</taxon>
    </lineage>
</organism>
<dbReference type="EMBL" id="AM920689">
    <property type="protein sequence ID" value="CAP52816.1"/>
    <property type="molecule type" value="Genomic_DNA"/>
</dbReference>
<dbReference type="SMR" id="B0RU74"/>
<dbReference type="KEGG" id="xca:xcc-b100_3451"/>
<dbReference type="HOGENOM" id="CLU_158491_1_2_6"/>
<dbReference type="Proteomes" id="UP000001188">
    <property type="component" value="Chromosome"/>
</dbReference>
<dbReference type="GO" id="GO:0022625">
    <property type="term" value="C:cytosolic large ribosomal subunit"/>
    <property type="evidence" value="ECO:0007669"/>
    <property type="project" value="TreeGrafter"/>
</dbReference>
<dbReference type="GO" id="GO:0003735">
    <property type="term" value="F:structural constituent of ribosome"/>
    <property type="evidence" value="ECO:0007669"/>
    <property type="project" value="InterPro"/>
</dbReference>
<dbReference type="GO" id="GO:0006412">
    <property type="term" value="P:translation"/>
    <property type="evidence" value="ECO:0007669"/>
    <property type="project" value="UniProtKB-UniRule"/>
</dbReference>
<dbReference type="CDD" id="cd00427">
    <property type="entry name" value="Ribosomal_L29_HIP"/>
    <property type="match status" value="1"/>
</dbReference>
<dbReference type="FunFam" id="1.10.287.310:FF:000001">
    <property type="entry name" value="50S ribosomal protein L29"/>
    <property type="match status" value="1"/>
</dbReference>
<dbReference type="Gene3D" id="1.10.287.310">
    <property type="match status" value="1"/>
</dbReference>
<dbReference type="HAMAP" id="MF_00374">
    <property type="entry name" value="Ribosomal_uL29"/>
    <property type="match status" value="1"/>
</dbReference>
<dbReference type="InterPro" id="IPR050063">
    <property type="entry name" value="Ribosomal_protein_uL29"/>
</dbReference>
<dbReference type="InterPro" id="IPR001854">
    <property type="entry name" value="Ribosomal_uL29"/>
</dbReference>
<dbReference type="InterPro" id="IPR036049">
    <property type="entry name" value="Ribosomal_uL29_sf"/>
</dbReference>
<dbReference type="NCBIfam" id="TIGR00012">
    <property type="entry name" value="L29"/>
    <property type="match status" value="1"/>
</dbReference>
<dbReference type="PANTHER" id="PTHR10916">
    <property type="entry name" value="60S RIBOSOMAL PROTEIN L35/50S RIBOSOMAL PROTEIN L29"/>
    <property type="match status" value="1"/>
</dbReference>
<dbReference type="PANTHER" id="PTHR10916:SF0">
    <property type="entry name" value="LARGE RIBOSOMAL SUBUNIT PROTEIN UL29C"/>
    <property type="match status" value="1"/>
</dbReference>
<dbReference type="Pfam" id="PF00831">
    <property type="entry name" value="Ribosomal_L29"/>
    <property type="match status" value="1"/>
</dbReference>
<dbReference type="SUPFAM" id="SSF46561">
    <property type="entry name" value="Ribosomal protein L29 (L29p)"/>
    <property type="match status" value="1"/>
</dbReference>
<protein>
    <recommendedName>
        <fullName evidence="1">Large ribosomal subunit protein uL29</fullName>
    </recommendedName>
    <alternativeName>
        <fullName evidence="2">50S ribosomal protein L29</fullName>
    </alternativeName>
</protein>
<proteinExistence type="inferred from homology"/>
<gene>
    <name evidence="1" type="primary">rpmC</name>
    <name type="ordered locus">xcc-b100_3451</name>
</gene>
<evidence type="ECO:0000255" key="1">
    <source>
        <dbReference type="HAMAP-Rule" id="MF_00374"/>
    </source>
</evidence>
<evidence type="ECO:0000305" key="2"/>
<feature type="chain" id="PRO_1000121839" description="Large ribosomal subunit protein uL29">
    <location>
        <begin position="1"/>
        <end position="61"/>
    </location>
</feature>
<comment type="similarity">
    <text evidence="1">Belongs to the universal ribosomal protein uL29 family.</text>
</comment>
<sequence>MDIKQLREKSADELKAHLTDLRKEQFSLRMQQVTGQLPKTHETRRVRREIARVKHLLGSTQ</sequence>
<name>RL29_XANCB</name>
<reference key="1">
    <citation type="journal article" date="2008" name="J. Biotechnol.">
        <title>The genome of Xanthomonas campestris pv. campestris B100 and its use for the reconstruction of metabolic pathways involved in xanthan biosynthesis.</title>
        <authorList>
            <person name="Vorhoelter F.-J."/>
            <person name="Schneiker S."/>
            <person name="Goesmann A."/>
            <person name="Krause L."/>
            <person name="Bekel T."/>
            <person name="Kaiser O."/>
            <person name="Linke B."/>
            <person name="Patschkowski T."/>
            <person name="Rueckert C."/>
            <person name="Schmid J."/>
            <person name="Sidhu V.K."/>
            <person name="Sieber V."/>
            <person name="Tauch A."/>
            <person name="Watt S.A."/>
            <person name="Weisshaar B."/>
            <person name="Becker A."/>
            <person name="Niehaus K."/>
            <person name="Puehler A."/>
        </authorList>
    </citation>
    <scope>NUCLEOTIDE SEQUENCE [LARGE SCALE GENOMIC DNA]</scope>
    <source>
        <strain>B100</strain>
    </source>
</reference>
<accession>B0RU74</accession>